<evidence type="ECO:0000255" key="1">
    <source>
        <dbReference type="HAMAP-Rule" id="MF_00331"/>
    </source>
</evidence>
<accession>B1JDR3</accession>
<dbReference type="EC" id="2.8.1.7" evidence="1"/>
<dbReference type="EMBL" id="CP000949">
    <property type="protein sequence ID" value="ACA74816.1"/>
    <property type="molecule type" value="Genomic_DNA"/>
</dbReference>
<dbReference type="SMR" id="B1JDR3"/>
<dbReference type="STRING" id="390235.PputW619_4336"/>
<dbReference type="KEGG" id="ppw:PputW619_4336"/>
<dbReference type="eggNOG" id="COG1104">
    <property type="taxonomic scope" value="Bacteria"/>
</dbReference>
<dbReference type="HOGENOM" id="CLU_003433_0_2_6"/>
<dbReference type="OrthoDB" id="9808002at2"/>
<dbReference type="UniPathway" id="UPA00266"/>
<dbReference type="GO" id="GO:1990221">
    <property type="term" value="C:L-cysteine desulfurase complex"/>
    <property type="evidence" value="ECO:0007669"/>
    <property type="project" value="UniProtKB-ARBA"/>
</dbReference>
<dbReference type="GO" id="GO:0051537">
    <property type="term" value="F:2 iron, 2 sulfur cluster binding"/>
    <property type="evidence" value="ECO:0007669"/>
    <property type="project" value="UniProtKB-UniRule"/>
</dbReference>
<dbReference type="GO" id="GO:0031071">
    <property type="term" value="F:cysteine desulfurase activity"/>
    <property type="evidence" value="ECO:0007669"/>
    <property type="project" value="UniProtKB-UniRule"/>
</dbReference>
<dbReference type="GO" id="GO:0046872">
    <property type="term" value="F:metal ion binding"/>
    <property type="evidence" value="ECO:0007669"/>
    <property type="project" value="UniProtKB-KW"/>
</dbReference>
<dbReference type="GO" id="GO:0030170">
    <property type="term" value="F:pyridoxal phosphate binding"/>
    <property type="evidence" value="ECO:0007669"/>
    <property type="project" value="UniProtKB-UniRule"/>
</dbReference>
<dbReference type="GO" id="GO:0044571">
    <property type="term" value="P:[2Fe-2S] cluster assembly"/>
    <property type="evidence" value="ECO:0007669"/>
    <property type="project" value="UniProtKB-UniRule"/>
</dbReference>
<dbReference type="FunFam" id="3.40.640.10:FF:000003">
    <property type="entry name" value="Cysteine desulfurase IscS"/>
    <property type="match status" value="1"/>
</dbReference>
<dbReference type="FunFam" id="3.90.1150.10:FF:000002">
    <property type="entry name" value="Cysteine desulfurase IscS"/>
    <property type="match status" value="1"/>
</dbReference>
<dbReference type="Gene3D" id="3.90.1150.10">
    <property type="entry name" value="Aspartate Aminotransferase, domain 1"/>
    <property type="match status" value="1"/>
</dbReference>
<dbReference type="Gene3D" id="3.40.640.10">
    <property type="entry name" value="Type I PLP-dependent aspartate aminotransferase-like (Major domain)"/>
    <property type="match status" value="1"/>
</dbReference>
<dbReference type="HAMAP" id="MF_00331">
    <property type="entry name" value="Cys_desulf_IscS"/>
    <property type="match status" value="1"/>
</dbReference>
<dbReference type="InterPro" id="IPR000192">
    <property type="entry name" value="Aminotrans_V_dom"/>
</dbReference>
<dbReference type="InterPro" id="IPR020578">
    <property type="entry name" value="Aminotrans_V_PyrdxlP_BS"/>
</dbReference>
<dbReference type="InterPro" id="IPR010240">
    <property type="entry name" value="Cys_deSase_IscS"/>
</dbReference>
<dbReference type="InterPro" id="IPR016454">
    <property type="entry name" value="Cysteine_dSase"/>
</dbReference>
<dbReference type="InterPro" id="IPR015424">
    <property type="entry name" value="PyrdxlP-dep_Trfase"/>
</dbReference>
<dbReference type="InterPro" id="IPR015421">
    <property type="entry name" value="PyrdxlP-dep_Trfase_major"/>
</dbReference>
<dbReference type="InterPro" id="IPR015422">
    <property type="entry name" value="PyrdxlP-dep_Trfase_small"/>
</dbReference>
<dbReference type="NCBIfam" id="TIGR02006">
    <property type="entry name" value="IscS"/>
    <property type="match status" value="1"/>
</dbReference>
<dbReference type="NCBIfam" id="NF010611">
    <property type="entry name" value="PRK14012.1"/>
    <property type="match status" value="1"/>
</dbReference>
<dbReference type="PANTHER" id="PTHR11601:SF34">
    <property type="entry name" value="CYSTEINE DESULFURASE"/>
    <property type="match status" value="1"/>
</dbReference>
<dbReference type="PANTHER" id="PTHR11601">
    <property type="entry name" value="CYSTEINE DESULFURYLASE FAMILY MEMBER"/>
    <property type="match status" value="1"/>
</dbReference>
<dbReference type="Pfam" id="PF00266">
    <property type="entry name" value="Aminotran_5"/>
    <property type="match status" value="1"/>
</dbReference>
<dbReference type="PIRSF" id="PIRSF005572">
    <property type="entry name" value="NifS"/>
    <property type="match status" value="1"/>
</dbReference>
<dbReference type="SUPFAM" id="SSF53383">
    <property type="entry name" value="PLP-dependent transferases"/>
    <property type="match status" value="1"/>
</dbReference>
<dbReference type="PROSITE" id="PS00595">
    <property type="entry name" value="AA_TRANSFER_CLASS_5"/>
    <property type="match status" value="1"/>
</dbReference>
<feature type="chain" id="PRO_1000119638" description="Cysteine desulfurase IscS">
    <location>
        <begin position="1"/>
        <end position="404"/>
    </location>
</feature>
<feature type="active site" description="Cysteine persulfide intermediate" evidence="1">
    <location>
        <position position="328"/>
    </location>
</feature>
<feature type="binding site" evidence="1">
    <location>
        <begin position="75"/>
        <end position="76"/>
    </location>
    <ligand>
        <name>pyridoxal 5'-phosphate</name>
        <dbReference type="ChEBI" id="CHEBI:597326"/>
    </ligand>
</feature>
<feature type="binding site" evidence="1">
    <location>
        <position position="155"/>
    </location>
    <ligand>
        <name>pyridoxal 5'-phosphate</name>
        <dbReference type="ChEBI" id="CHEBI:597326"/>
    </ligand>
</feature>
<feature type="binding site" evidence="1">
    <location>
        <position position="183"/>
    </location>
    <ligand>
        <name>pyridoxal 5'-phosphate</name>
        <dbReference type="ChEBI" id="CHEBI:597326"/>
    </ligand>
</feature>
<feature type="binding site" evidence="1">
    <location>
        <begin position="203"/>
        <end position="205"/>
    </location>
    <ligand>
        <name>pyridoxal 5'-phosphate</name>
        <dbReference type="ChEBI" id="CHEBI:597326"/>
    </ligand>
</feature>
<feature type="binding site" evidence="1">
    <location>
        <position position="243"/>
    </location>
    <ligand>
        <name>pyridoxal 5'-phosphate</name>
        <dbReference type="ChEBI" id="CHEBI:597326"/>
    </ligand>
</feature>
<feature type="binding site" description="via persulfide group" evidence="1">
    <location>
        <position position="328"/>
    </location>
    <ligand>
        <name>[2Fe-2S] cluster</name>
        <dbReference type="ChEBI" id="CHEBI:190135"/>
        <note>ligand shared with IscU</note>
    </ligand>
</feature>
<feature type="modified residue" description="N6-(pyridoxal phosphate)lysine" evidence="1">
    <location>
        <position position="206"/>
    </location>
</feature>
<proteinExistence type="inferred from homology"/>
<organism>
    <name type="scientific">Pseudomonas putida (strain W619)</name>
    <dbReference type="NCBI Taxonomy" id="390235"/>
    <lineage>
        <taxon>Bacteria</taxon>
        <taxon>Pseudomonadati</taxon>
        <taxon>Pseudomonadota</taxon>
        <taxon>Gammaproteobacteria</taxon>
        <taxon>Pseudomonadales</taxon>
        <taxon>Pseudomonadaceae</taxon>
        <taxon>Pseudomonas</taxon>
    </lineage>
</organism>
<keyword id="KW-0001">2Fe-2S</keyword>
<keyword id="KW-0963">Cytoplasm</keyword>
<keyword id="KW-0408">Iron</keyword>
<keyword id="KW-0411">Iron-sulfur</keyword>
<keyword id="KW-0479">Metal-binding</keyword>
<keyword id="KW-0663">Pyridoxal phosphate</keyword>
<keyword id="KW-0808">Transferase</keyword>
<reference key="1">
    <citation type="submission" date="2008-02" db="EMBL/GenBank/DDBJ databases">
        <title>Complete sequence of Pseudomonas putida W619.</title>
        <authorList>
            <person name="Copeland A."/>
            <person name="Lucas S."/>
            <person name="Lapidus A."/>
            <person name="Barry K."/>
            <person name="Detter J.C."/>
            <person name="Glavina del Rio T."/>
            <person name="Dalin E."/>
            <person name="Tice H."/>
            <person name="Pitluck S."/>
            <person name="Chain P."/>
            <person name="Malfatti S."/>
            <person name="Shin M."/>
            <person name="Vergez L."/>
            <person name="Schmutz J."/>
            <person name="Larimer F."/>
            <person name="Land M."/>
            <person name="Hauser L."/>
            <person name="Kyrpides N."/>
            <person name="Kim E."/>
            <person name="Taghavi S."/>
            <person name="Vangronsveld D."/>
            <person name="van der Lelie D."/>
            <person name="Richardson P."/>
        </authorList>
    </citation>
    <scope>NUCLEOTIDE SEQUENCE [LARGE SCALE GENOMIC DNA]</scope>
    <source>
        <strain>W619</strain>
    </source>
</reference>
<gene>
    <name evidence="1" type="primary">iscS</name>
    <name type="ordered locus">PputW619_4336</name>
</gene>
<comment type="function">
    <text evidence="1">Master enzyme that delivers sulfur to a number of partners involved in Fe-S cluster assembly, tRNA modification or cofactor biosynthesis. Catalyzes the removal of elemental sulfur atoms from cysteine to produce alanine. Functions as a sulfur delivery protein for Fe-S cluster synthesis onto IscU, an Fe-S scaffold assembly protein, as well as other S acceptor proteins.</text>
</comment>
<comment type="catalytic activity">
    <reaction evidence="1">
        <text>(sulfur carrier)-H + L-cysteine = (sulfur carrier)-SH + L-alanine</text>
        <dbReference type="Rhea" id="RHEA:43892"/>
        <dbReference type="Rhea" id="RHEA-COMP:14737"/>
        <dbReference type="Rhea" id="RHEA-COMP:14739"/>
        <dbReference type="ChEBI" id="CHEBI:29917"/>
        <dbReference type="ChEBI" id="CHEBI:35235"/>
        <dbReference type="ChEBI" id="CHEBI:57972"/>
        <dbReference type="ChEBI" id="CHEBI:64428"/>
        <dbReference type="EC" id="2.8.1.7"/>
    </reaction>
</comment>
<comment type="cofactor">
    <cofactor evidence="1">
        <name>pyridoxal 5'-phosphate</name>
        <dbReference type="ChEBI" id="CHEBI:597326"/>
    </cofactor>
</comment>
<comment type="pathway">
    <text evidence="1">Cofactor biosynthesis; iron-sulfur cluster biosynthesis.</text>
</comment>
<comment type="subunit">
    <text evidence="1">Homodimer. Forms a heterotetramer with IscU, interacts with other sulfur acceptors.</text>
</comment>
<comment type="subcellular location">
    <subcellularLocation>
        <location evidence="1">Cytoplasm</location>
    </subcellularLocation>
</comment>
<comment type="similarity">
    <text evidence="1">Belongs to the class-V pyridoxal-phosphate-dependent aminotransferase family. NifS/IscS subfamily.</text>
</comment>
<sequence>MKLPIYLDYSATTPVDPRVAQKMADCLLVDGNFGNPASRSHVFGWKAEEAVENGRRQVAELINADPREIVWTSGATESDNLAIKGVAHFYQSKGKHIITSKIEHKAVLDTARQLEREGFEVTYLEPGEDGIVTPAQVEAVLRDDTILVSLMHVNNEVGSINDIAAIGELTRSRGVLFHVDAAQSAGKVEIDLQKLKVDLMSFSAHKAYGPKGIGALYVSRKPRVRLEAIIHGGGHERGMRSGTLPTHQIVGMGEAFAIAKQEMAAENQRIKALSDRFFKQVSDLEELYVNGSQTARVPHNLNLSFNYVEGESLLMSLKDIAVSSGSACTSASLEPSYVLRALGRNDELAHSSIRFSFGRFTTEEEVDYAAQKVCEAVNKLRELSPLWDMYKDGVDISKIEWAAH</sequence>
<name>ISCS_PSEPW</name>
<protein>
    <recommendedName>
        <fullName evidence="1">Cysteine desulfurase IscS</fullName>
        <ecNumber evidence="1">2.8.1.7</ecNumber>
    </recommendedName>
</protein>